<comment type="function">
    <text evidence="1">Together with its co-chaperonin GroES, plays an essential role in assisting protein folding. The GroEL-GroES system forms a nano-cage that allows encapsulation of the non-native substrate proteins and provides a physical environment optimized to promote and accelerate protein folding.</text>
</comment>
<comment type="catalytic activity">
    <reaction evidence="1">
        <text>ATP + H2O + a folded polypeptide = ADP + phosphate + an unfolded polypeptide.</text>
        <dbReference type="EC" id="5.6.1.7"/>
    </reaction>
</comment>
<comment type="subunit">
    <text evidence="1">Forms a cylinder of 14 subunits composed of two heptameric rings stacked back-to-back. Interacts with the co-chaperonin GroES.</text>
</comment>
<comment type="subcellular location">
    <subcellularLocation>
        <location evidence="1">Cytoplasm</location>
    </subcellularLocation>
</comment>
<comment type="similarity">
    <text evidence="1">Belongs to the chaperonin (HSP60) family.</text>
</comment>
<keyword id="KW-0067">ATP-binding</keyword>
<keyword id="KW-0143">Chaperone</keyword>
<keyword id="KW-0963">Cytoplasm</keyword>
<keyword id="KW-0413">Isomerase</keyword>
<keyword id="KW-0547">Nucleotide-binding</keyword>
<name>CH601_ROSS1</name>
<proteinExistence type="inferred from homology"/>
<feature type="chain" id="PRO_0000332066" description="Chaperonin GroEL 1">
    <location>
        <begin position="1"/>
        <end position="546"/>
    </location>
</feature>
<feature type="binding site" evidence="1">
    <location>
        <begin position="29"/>
        <end position="32"/>
    </location>
    <ligand>
        <name>ATP</name>
        <dbReference type="ChEBI" id="CHEBI:30616"/>
    </ligand>
</feature>
<feature type="binding site" evidence="1">
    <location>
        <begin position="86"/>
        <end position="90"/>
    </location>
    <ligand>
        <name>ATP</name>
        <dbReference type="ChEBI" id="CHEBI:30616"/>
    </ligand>
</feature>
<feature type="binding site" evidence="1">
    <location>
        <position position="414"/>
    </location>
    <ligand>
        <name>ATP</name>
        <dbReference type="ChEBI" id="CHEBI:30616"/>
    </ligand>
</feature>
<feature type="binding site" evidence="1">
    <location>
        <position position="499"/>
    </location>
    <ligand>
        <name>ATP</name>
        <dbReference type="ChEBI" id="CHEBI:30616"/>
    </ligand>
</feature>
<evidence type="ECO:0000255" key="1">
    <source>
        <dbReference type="HAMAP-Rule" id="MF_00600"/>
    </source>
</evidence>
<organism>
    <name type="scientific">Roseiflexus sp. (strain RS-1)</name>
    <dbReference type="NCBI Taxonomy" id="357808"/>
    <lineage>
        <taxon>Bacteria</taxon>
        <taxon>Bacillati</taxon>
        <taxon>Chloroflexota</taxon>
        <taxon>Chloroflexia</taxon>
        <taxon>Chloroflexales</taxon>
        <taxon>Roseiflexineae</taxon>
        <taxon>Roseiflexaceae</taxon>
        <taxon>Roseiflexus</taxon>
    </lineage>
</organism>
<gene>
    <name evidence="1" type="primary">groEL1</name>
    <name evidence="1" type="synonym">groL1</name>
    <name type="ordered locus">RoseRS_1077</name>
</gene>
<accession>A5US83</accession>
<reference key="1">
    <citation type="submission" date="2007-04" db="EMBL/GenBank/DDBJ databases">
        <title>Complete sequence of Roseiflexus sp. RS-1.</title>
        <authorList>
            <consortium name="US DOE Joint Genome Institute"/>
            <person name="Copeland A."/>
            <person name="Lucas S."/>
            <person name="Lapidus A."/>
            <person name="Barry K."/>
            <person name="Detter J.C."/>
            <person name="Glavina del Rio T."/>
            <person name="Hammon N."/>
            <person name="Israni S."/>
            <person name="Dalin E."/>
            <person name="Tice H."/>
            <person name="Pitluck S."/>
            <person name="Chertkov O."/>
            <person name="Brettin T."/>
            <person name="Bruce D."/>
            <person name="Han C."/>
            <person name="Schmutz J."/>
            <person name="Larimer F."/>
            <person name="Land M."/>
            <person name="Hauser L."/>
            <person name="Kyrpides N."/>
            <person name="Mikhailova N."/>
            <person name="Bryant D.A."/>
            <person name="Richardson P."/>
        </authorList>
    </citation>
    <scope>NUCLEOTIDE SEQUENCE [LARGE SCALE GENOMIC DNA]</scope>
    <source>
        <strain>RS-1</strain>
    </source>
</reference>
<sequence length="546" mass="58851">MAKQVIFNEQARAALKHGVDTLALAVKTTLGPRGRNVAMGKKWGAPSVTHDGVTVAKEVELKDPFQNMGAQLLKEAASKTNDVAGDGTTTATVLAQAMIDEGLKLVAAGANPMIFKRGLDKGREALVARIKEQSITLKSRDEIRQVATISAQDPEIGELLATIMDKIGHDGVVTIEEGKGTTLEYELVEGMQFDRGYISPYFVTDSSRMEAVIDEPYILITDKKISAVNDLLPILEAVLATGKKDLVIIAEDVDGEALATLVVNKMRGTLNALAVKAPGFGDRRKAMLQDIAILTGGTVISEEVGRKLDSAKVQDLGRARRVKSDKDNTVIVEGFGDKQAIQARIRQLKQQIETTTSDYDREKLQERVAKLSGGVAVIKVGAPTEPALKERKARVEDALNATRAAVEEGIVPGGGIALLNAIPALDNVQTQFEEERMALNILRRALEEPLRQLAINAGEDGSVVVNQVRTLQREHNNPNYGFDVMTGKYVDLMQAGIIDPAKVVRTALENAVSVAGIVLTTDALITDAPEPKKNGARTPSMPEEEF</sequence>
<dbReference type="EC" id="5.6.1.7" evidence="1"/>
<dbReference type="EMBL" id="CP000686">
    <property type="protein sequence ID" value="ABQ89486.1"/>
    <property type="molecule type" value="Genomic_DNA"/>
</dbReference>
<dbReference type="RefSeq" id="WP_011955839.1">
    <property type="nucleotide sequence ID" value="NC_009523.1"/>
</dbReference>
<dbReference type="SMR" id="A5US83"/>
<dbReference type="STRING" id="357808.RoseRS_1077"/>
<dbReference type="KEGG" id="rrs:RoseRS_1077"/>
<dbReference type="eggNOG" id="COG0459">
    <property type="taxonomic scope" value="Bacteria"/>
</dbReference>
<dbReference type="HOGENOM" id="CLU_016503_3_0_0"/>
<dbReference type="OrthoDB" id="9766614at2"/>
<dbReference type="Proteomes" id="UP000006554">
    <property type="component" value="Chromosome"/>
</dbReference>
<dbReference type="GO" id="GO:0005737">
    <property type="term" value="C:cytoplasm"/>
    <property type="evidence" value="ECO:0007669"/>
    <property type="project" value="UniProtKB-SubCell"/>
</dbReference>
<dbReference type="GO" id="GO:0005524">
    <property type="term" value="F:ATP binding"/>
    <property type="evidence" value="ECO:0007669"/>
    <property type="project" value="UniProtKB-UniRule"/>
</dbReference>
<dbReference type="GO" id="GO:0140662">
    <property type="term" value="F:ATP-dependent protein folding chaperone"/>
    <property type="evidence" value="ECO:0007669"/>
    <property type="project" value="InterPro"/>
</dbReference>
<dbReference type="GO" id="GO:0016853">
    <property type="term" value="F:isomerase activity"/>
    <property type="evidence" value="ECO:0007669"/>
    <property type="project" value="UniProtKB-KW"/>
</dbReference>
<dbReference type="GO" id="GO:0051082">
    <property type="term" value="F:unfolded protein binding"/>
    <property type="evidence" value="ECO:0007669"/>
    <property type="project" value="UniProtKB-UniRule"/>
</dbReference>
<dbReference type="GO" id="GO:0042026">
    <property type="term" value="P:protein refolding"/>
    <property type="evidence" value="ECO:0007669"/>
    <property type="project" value="UniProtKB-UniRule"/>
</dbReference>
<dbReference type="CDD" id="cd03344">
    <property type="entry name" value="GroEL"/>
    <property type="match status" value="1"/>
</dbReference>
<dbReference type="FunFam" id="3.50.7.10:FF:000001">
    <property type="entry name" value="60 kDa chaperonin"/>
    <property type="match status" value="1"/>
</dbReference>
<dbReference type="Gene3D" id="3.50.7.10">
    <property type="entry name" value="GroEL"/>
    <property type="match status" value="1"/>
</dbReference>
<dbReference type="Gene3D" id="1.10.560.10">
    <property type="entry name" value="GroEL-like equatorial domain"/>
    <property type="match status" value="1"/>
</dbReference>
<dbReference type="Gene3D" id="3.30.260.10">
    <property type="entry name" value="TCP-1-like chaperonin intermediate domain"/>
    <property type="match status" value="1"/>
</dbReference>
<dbReference type="HAMAP" id="MF_00600">
    <property type="entry name" value="CH60"/>
    <property type="match status" value="1"/>
</dbReference>
<dbReference type="InterPro" id="IPR018370">
    <property type="entry name" value="Chaperonin_Cpn60_CS"/>
</dbReference>
<dbReference type="InterPro" id="IPR001844">
    <property type="entry name" value="Cpn60/GroEL"/>
</dbReference>
<dbReference type="InterPro" id="IPR002423">
    <property type="entry name" value="Cpn60/GroEL/TCP-1"/>
</dbReference>
<dbReference type="InterPro" id="IPR027409">
    <property type="entry name" value="GroEL-like_apical_dom_sf"/>
</dbReference>
<dbReference type="InterPro" id="IPR027413">
    <property type="entry name" value="GROEL-like_equatorial_sf"/>
</dbReference>
<dbReference type="InterPro" id="IPR027410">
    <property type="entry name" value="TCP-1-like_intermed_sf"/>
</dbReference>
<dbReference type="NCBIfam" id="TIGR02348">
    <property type="entry name" value="GroEL"/>
    <property type="match status" value="1"/>
</dbReference>
<dbReference type="NCBIfam" id="NF000592">
    <property type="entry name" value="PRK00013.1"/>
    <property type="match status" value="1"/>
</dbReference>
<dbReference type="NCBIfam" id="NF009487">
    <property type="entry name" value="PRK12849.1"/>
    <property type="match status" value="1"/>
</dbReference>
<dbReference type="NCBIfam" id="NF009488">
    <property type="entry name" value="PRK12850.1"/>
    <property type="match status" value="1"/>
</dbReference>
<dbReference type="NCBIfam" id="NF009489">
    <property type="entry name" value="PRK12851.1"/>
    <property type="match status" value="1"/>
</dbReference>
<dbReference type="PANTHER" id="PTHR45633">
    <property type="entry name" value="60 KDA HEAT SHOCK PROTEIN, MITOCHONDRIAL"/>
    <property type="match status" value="1"/>
</dbReference>
<dbReference type="Pfam" id="PF00118">
    <property type="entry name" value="Cpn60_TCP1"/>
    <property type="match status" value="1"/>
</dbReference>
<dbReference type="PRINTS" id="PR00298">
    <property type="entry name" value="CHAPERONIN60"/>
</dbReference>
<dbReference type="SUPFAM" id="SSF52029">
    <property type="entry name" value="GroEL apical domain-like"/>
    <property type="match status" value="1"/>
</dbReference>
<dbReference type="SUPFAM" id="SSF48592">
    <property type="entry name" value="GroEL equatorial domain-like"/>
    <property type="match status" value="1"/>
</dbReference>
<dbReference type="SUPFAM" id="SSF54849">
    <property type="entry name" value="GroEL-intermediate domain like"/>
    <property type="match status" value="1"/>
</dbReference>
<dbReference type="PROSITE" id="PS00296">
    <property type="entry name" value="CHAPERONINS_CPN60"/>
    <property type="match status" value="1"/>
</dbReference>
<protein>
    <recommendedName>
        <fullName evidence="1">Chaperonin GroEL 1</fullName>
        <ecNumber evidence="1">5.6.1.7</ecNumber>
    </recommendedName>
    <alternativeName>
        <fullName evidence="1">60 kDa chaperonin 1</fullName>
    </alternativeName>
    <alternativeName>
        <fullName evidence="1">Chaperonin-60 1</fullName>
        <shortName evidence="1">Cpn60 1</shortName>
    </alternativeName>
</protein>